<protein>
    <recommendedName>
        <fullName evidence="1">Cell division protein FtsQ</fullName>
    </recommendedName>
</protein>
<comment type="function">
    <text evidence="1">Essential cell division protein.</text>
</comment>
<comment type="subcellular location">
    <subcellularLocation>
        <location evidence="1">Cell inner membrane</location>
        <topology evidence="1">Single-pass type II membrane protein</topology>
    </subcellularLocation>
    <text evidence="1">Localizes to the division septum.</text>
</comment>
<comment type="similarity">
    <text evidence="1">Belongs to the FtsQ/DivIB family. FtsQ subfamily.</text>
</comment>
<accession>D0MGK7</accession>
<proteinExistence type="inferred from homology"/>
<name>FTSQ_RHOM4</name>
<keyword id="KW-0131">Cell cycle</keyword>
<keyword id="KW-0132">Cell division</keyword>
<keyword id="KW-0997">Cell inner membrane</keyword>
<keyword id="KW-1003">Cell membrane</keyword>
<keyword id="KW-0472">Membrane</keyword>
<keyword id="KW-1185">Reference proteome</keyword>
<keyword id="KW-0812">Transmembrane</keyword>
<keyword id="KW-1133">Transmembrane helix</keyword>
<sequence>MPPRKAHTTRRTPAKKSGVRRRLLRLLVTGVPVLALCGVAWLWLESVRLTRIEIVGARQADPGELRRLAAVDSGAALFDLDPALIADRVARHPWVQAASVTRWPTGTLRIAVEERVPVVLQMDAGGRPLRYLDAEGYGMPPGRGPVPDVPLLYGVRGPAHPMRPLEDEPVRALLTTLAALEDPARALISEIVRAPDGEFWLYTTPAAGQRSVPVRLGREDFERRLRRLVAFWQQAVLTQPHKTFSLIDLRFANQIVVREEAHPSTQKSAMGHE</sequence>
<reference key="1">
    <citation type="journal article" date="2009" name="Stand. Genomic Sci.">
        <title>Complete genome sequence of Rhodothermus marinus type strain (R-10).</title>
        <authorList>
            <person name="Nolan M."/>
            <person name="Tindall B.J."/>
            <person name="Pomrenke H."/>
            <person name="Lapidus A."/>
            <person name="Copeland A."/>
            <person name="Glavina Del Rio T."/>
            <person name="Lucas S."/>
            <person name="Chen F."/>
            <person name="Tice H."/>
            <person name="Cheng J.F."/>
            <person name="Saunders E."/>
            <person name="Han C."/>
            <person name="Bruce D."/>
            <person name="Goodwin L."/>
            <person name="Chain P."/>
            <person name="Pitluck S."/>
            <person name="Ovchinikova G."/>
            <person name="Pati A."/>
            <person name="Ivanova N."/>
            <person name="Mavromatis K."/>
            <person name="Chen A."/>
            <person name="Palaniappan K."/>
            <person name="Land M."/>
            <person name="Hauser L."/>
            <person name="Chang Y.J."/>
            <person name="Jeffries C.D."/>
            <person name="Brettin T."/>
            <person name="Goker M."/>
            <person name="Bristow J."/>
            <person name="Eisen J.A."/>
            <person name="Markowitz V."/>
            <person name="Hugenholtz P."/>
            <person name="Kyrpides N.C."/>
            <person name="Klenk H.P."/>
            <person name="Detter J.C."/>
        </authorList>
    </citation>
    <scope>NUCLEOTIDE SEQUENCE [LARGE SCALE GENOMIC DNA]</scope>
    <source>
        <strain>ATCC 43812 / DSM 4252 / R-10</strain>
    </source>
</reference>
<evidence type="ECO:0000255" key="1">
    <source>
        <dbReference type="HAMAP-Rule" id="MF_00911"/>
    </source>
</evidence>
<evidence type="ECO:0000255" key="2">
    <source>
        <dbReference type="PROSITE-ProRule" id="PRU01115"/>
    </source>
</evidence>
<feature type="chain" id="PRO_0000414690" description="Cell division protein FtsQ">
    <location>
        <begin position="1"/>
        <end position="273"/>
    </location>
</feature>
<feature type="topological domain" description="Cytoplasmic" evidence="1">
    <location>
        <begin position="1"/>
        <end position="20"/>
    </location>
</feature>
<feature type="transmembrane region" description="Helical" evidence="1">
    <location>
        <begin position="21"/>
        <end position="43"/>
    </location>
</feature>
<feature type="topological domain" description="Periplasmic" evidence="1">
    <location>
        <begin position="44"/>
        <end position="273"/>
    </location>
</feature>
<feature type="domain" description="POTRA" evidence="2">
    <location>
        <begin position="47"/>
        <end position="115"/>
    </location>
</feature>
<gene>
    <name evidence="1" type="primary">ftsQ</name>
    <name type="ordered locus">Rmar_2699</name>
</gene>
<organism>
    <name type="scientific">Rhodothermus marinus (strain ATCC 43812 / DSM 4252 / R-10)</name>
    <name type="common">Rhodothermus obamensis</name>
    <dbReference type="NCBI Taxonomy" id="518766"/>
    <lineage>
        <taxon>Bacteria</taxon>
        <taxon>Pseudomonadati</taxon>
        <taxon>Rhodothermota</taxon>
        <taxon>Rhodothermia</taxon>
        <taxon>Rhodothermales</taxon>
        <taxon>Rhodothermaceae</taxon>
        <taxon>Rhodothermus</taxon>
    </lineage>
</organism>
<dbReference type="EMBL" id="CP001807">
    <property type="protein sequence ID" value="ACY49570.1"/>
    <property type="molecule type" value="Genomic_DNA"/>
</dbReference>
<dbReference type="RefSeq" id="WP_012845180.1">
    <property type="nucleotide sequence ID" value="NC_013501.1"/>
</dbReference>
<dbReference type="SMR" id="D0MGK7"/>
<dbReference type="STRING" id="518766.Rmar_2699"/>
<dbReference type="KEGG" id="rmr:Rmar_2699"/>
<dbReference type="eggNOG" id="COG1589">
    <property type="taxonomic scope" value="Bacteria"/>
</dbReference>
<dbReference type="HOGENOM" id="CLU_1073209_0_0_10"/>
<dbReference type="OrthoDB" id="1523641at2"/>
<dbReference type="Proteomes" id="UP000002221">
    <property type="component" value="Chromosome"/>
</dbReference>
<dbReference type="GO" id="GO:0032153">
    <property type="term" value="C:cell division site"/>
    <property type="evidence" value="ECO:0007669"/>
    <property type="project" value="UniProtKB-UniRule"/>
</dbReference>
<dbReference type="GO" id="GO:0005886">
    <property type="term" value="C:plasma membrane"/>
    <property type="evidence" value="ECO:0007669"/>
    <property type="project" value="UniProtKB-SubCell"/>
</dbReference>
<dbReference type="GO" id="GO:0090529">
    <property type="term" value="P:cell septum assembly"/>
    <property type="evidence" value="ECO:0007669"/>
    <property type="project" value="InterPro"/>
</dbReference>
<dbReference type="GO" id="GO:0043093">
    <property type="term" value="P:FtsZ-dependent cytokinesis"/>
    <property type="evidence" value="ECO:0007669"/>
    <property type="project" value="UniProtKB-UniRule"/>
</dbReference>
<dbReference type="Gene3D" id="3.40.50.11690">
    <property type="entry name" value="Cell division protein FtsQ/DivIB"/>
    <property type="match status" value="1"/>
</dbReference>
<dbReference type="Gene3D" id="3.10.20.310">
    <property type="entry name" value="membrane protein fhac"/>
    <property type="match status" value="1"/>
</dbReference>
<dbReference type="HAMAP" id="MF_00911">
    <property type="entry name" value="FtsQ_subfam"/>
    <property type="match status" value="1"/>
</dbReference>
<dbReference type="InterPro" id="IPR005548">
    <property type="entry name" value="Cell_div_FtsQ/DivIB_C"/>
</dbReference>
<dbReference type="InterPro" id="IPR026579">
    <property type="entry name" value="FtsQ"/>
</dbReference>
<dbReference type="InterPro" id="IPR045335">
    <property type="entry name" value="FtsQ_C_sf"/>
</dbReference>
<dbReference type="InterPro" id="IPR034746">
    <property type="entry name" value="POTRA"/>
</dbReference>
<dbReference type="InterPro" id="IPR013685">
    <property type="entry name" value="POTRA_FtsQ_type"/>
</dbReference>
<dbReference type="PANTHER" id="PTHR35851">
    <property type="entry name" value="CELL DIVISION PROTEIN FTSQ"/>
    <property type="match status" value="1"/>
</dbReference>
<dbReference type="PANTHER" id="PTHR35851:SF1">
    <property type="entry name" value="CELL DIVISION PROTEIN FTSQ"/>
    <property type="match status" value="1"/>
</dbReference>
<dbReference type="Pfam" id="PF03799">
    <property type="entry name" value="FtsQ_DivIB_C"/>
    <property type="match status" value="1"/>
</dbReference>
<dbReference type="Pfam" id="PF08478">
    <property type="entry name" value="POTRA_1"/>
    <property type="match status" value="1"/>
</dbReference>
<dbReference type="PROSITE" id="PS51779">
    <property type="entry name" value="POTRA"/>
    <property type="match status" value="1"/>
</dbReference>